<protein>
    <recommendedName>
        <fullName evidence="1">Undecaprenyl-diphosphatase</fullName>
        <ecNumber evidence="1">3.6.1.27</ecNumber>
    </recommendedName>
    <alternativeName>
        <fullName evidence="1">Bacitracin resistance protein</fullName>
    </alternativeName>
    <alternativeName>
        <fullName evidence="1">Undecaprenyl pyrophosphate phosphatase</fullName>
    </alternativeName>
</protein>
<accession>B7J1I6</accession>
<keyword id="KW-0046">Antibiotic resistance</keyword>
<keyword id="KW-0997">Cell inner membrane</keyword>
<keyword id="KW-1003">Cell membrane</keyword>
<keyword id="KW-0133">Cell shape</keyword>
<keyword id="KW-0961">Cell wall biogenesis/degradation</keyword>
<keyword id="KW-0378">Hydrolase</keyword>
<keyword id="KW-0472">Membrane</keyword>
<keyword id="KW-0573">Peptidoglycan synthesis</keyword>
<keyword id="KW-0812">Transmembrane</keyword>
<keyword id="KW-1133">Transmembrane helix</keyword>
<dbReference type="EC" id="3.6.1.27" evidence="1"/>
<dbReference type="EMBL" id="CP001205">
    <property type="protein sequence ID" value="ACK74928.1"/>
    <property type="molecule type" value="Genomic_DNA"/>
</dbReference>
<dbReference type="RefSeq" id="WP_002657697.1">
    <property type="nucleotide sequence ID" value="NC_011728.1"/>
</dbReference>
<dbReference type="SMR" id="B7J1I6"/>
<dbReference type="KEGG" id="bbz:BbuZS7_0264"/>
<dbReference type="HOGENOM" id="CLU_060296_1_2_12"/>
<dbReference type="Proteomes" id="UP000006901">
    <property type="component" value="Chromosome"/>
</dbReference>
<dbReference type="GO" id="GO:0005886">
    <property type="term" value="C:plasma membrane"/>
    <property type="evidence" value="ECO:0007669"/>
    <property type="project" value="UniProtKB-SubCell"/>
</dbReference>
<dbReference type="GO" id="GO:0050380">
    <property type="term" value="F:undecaprenyl-diphosphatase activity"/>
    <property type="evidence" value="ECO:0007669"/>
    <property type="project" value="UniProtKB-UniRule"/>
</dbReference>
<dbReference type="GO" id="GO:0071555">
    <property type="term" value="P:cell wall organization"/>
    <property type="evidence" value="ECO:0007669"/>
    <property type="project" value="UniProtKB-KW"/>
</dbReference>
<dbReference type="GO" id="GO:0009252">
    <property type="term" value="P:peptidoglycan biosynthetic process"/>
    <property type="evidence" value="ECO:0007669"/>
    <property type="project" value="UniProtKB-KW"/>
</dbReference>
<dbReference type="GO" id="GO:0008360">
    <property type="term" value="P:regulation of cell shape"/>
    <property type="evidence" value="ECO:0007669"/>
    <property type="project" value="UniProtKB-KW"/>
</dbReference>
<dbReference type="GO" id="GO:0046677">
    <property type="term" value="P:response to antibiotic"/>
    <property type="evidence" value="ECO:0007669"/>
    <property type="project" value="UniProtKB-UniRule"/>
</dbReference>
<dbReference type="HAMAP" id="MF_01006">
    <property type="entry name" value="Undec_diphosphatase"/>
    <property type="match status" value="1"/>
</dbReference>
<dbReference type="InterPro" id="IPR003824">
    <property type="entry name" value="UppP"/>
</dbReference>
<dbReference type="NCBIfam" id="NF001396">
    <property type="entry name" value="PRK00281.3-3"/>
    <property type="match status" value="1"/>
</dbReference>
<dbReference type="NCBIfam" id="TIGR00753">
    <property type="entry name" value="undec_PP_bacA"/>
    <property type="match status" value="1"/>
</dbReference>
<dbReference type="PANTHER" id="PTHR30622">
    <property type="entry name" value="UNDECAPRENYL-DIPHOSPHATASE"/>
    <property type="match status" value="1"/>
</dbReference>
<dbReference type="PANTHER" id="PTHR30622:SF2">
    <property type="entry name" value="UNDECAPRENYL-DIPHOSPHATASE"/>
    <property type="match status" value="1"/>
</dbReference>
<dbReference type="Pfam" id="PF02673">
    <property type="entry name" value="BacA"/>
    <property type="match status" value="1"/>
</dbReference>
<gene>
    <name evidence="1" type="primary">uppP</name>
    <name type="ordered locus">BbuZS7_0264</name>
</gene>
<reference key="1">
    <citation type="journal article" date="2011" name="J. Bacteriol.">
        <title>Whole-genome sequences of thirteen isolates of Borrelia burgdorferi.</title>
        <authorList>
            <person name="Schutzer S.E."/>
            <person name="Fraser-Liggett C.M."/>
            <person name="Casjens S.R."/>
            <person name="Qiu W.G."/>
            <person name="Dunn J.J."/>
            <person name="Mongodin E.F."/>
            <person name="Luft B.J."/>
        </authorList>
    </citation>
    <scope>NUCLEOTIDE SEQUENCE [LARGE SCALE GENOMIC DNA]</scope>
    <source>
        <strain>ZS7</strain>
    </source>
</reference>
<comment type="function">
    <text evidence="1">Catalyzes the dephosphorylation of undecaprenyl diphosphate (UPP). Confers resistance to bacitracin.</text>
</comment>
<comment type="catalytic activity">
    <reaction evidence="1">
        <text>di-trans,octa-cis-undecaprenyl diphosphate + H2O = di-trans,octa-cis-undecaprenyl phosphate + phosphate + H(+)</text>
        <dbReference type="Rhea" id="RHEA:28094"/>
        <dbReference type="ChEBI" id="CHEBI:15377"/>
        <dbReference type="ChEBI" id="CHEBI:15378"/>
        <dbReference type="ChEBI" id="CHEBI:43474"/>
        <dbReference type="ChEBI" id="CHEBI:58405"/>
        <dbReference type="ChEBI" id="CHEBI:60392"/>
        <dbReference type="EC" id="3.6.1.27"/>
    </reaction>
</comment>
<comment type="subcellular location">
    <subcellularLocation>
        <location evidence="1">Cell inner membrane</location>
        <topology evidence="1">Multi-pass membrane protein</topology>
    </subcellularLocation>
</comment>
<comment type="miscellaneous">
    <text>Bacitracin is thought to be involved in the inhibition of peptidoglycan synthesis by sequestering undecaprenyl diphosphate, thereby reducing the pool of lipid carrier available.</text>
</comment>
<comment type="similarity">
    <text evidence="1">Belongs to the UppP family.</text>
</comment>
<organism>
    <name type="scientific">Borreliella burgdorferi (strain ZS7)</name>
    <name type="common">Borrelia burgdorferi</name>
    <dbReference type="NCBI Taxonomy" id="445985"/>
    <lineage>
        <taxon>Bacteria</taxon>
        <taxon>Pseudomonadati</taxon>
        <taxon>Spirochaetota</taxon>
        <taxon>Spirochaetia</taxon>
        <taxon>Spirochaetales</taxon>
        <taxon>Borreliaceae</taxon>
        <taxon>Borreliella</taxon>
    </lineage>
</organism>
<name>UPPP_BORBZ</name>
<sequence length="266" mass="30271">MTNILSAIILGIIQGITEFLPISSSGHLLLFRHFINLKLSIIFDIYLHLATVLVIIIYYRKRILELFLTFIRFSLRKTVKSDLTNLKLILLILIITIVTGVVGTFISKYESMFTLSFVLINFIITGILILMLEFNFLKVDFKGNILLAGIFMGLMQGLGALPGISRSGITIFSASVIGFNRKSAFEISFLSLIPIVFGAILLKHKEFYDIFMVLNFFEINLGALVAFVVGIFSINFFFKMLNNKKLYYFSIYLFALSIIVCYFVRI</sequence>
<evidence type="ECO:0000255" key="1">
    <source>
        <dbReference type="HAMAP-Rule" id="MF_01006"/>
    </source>
</evidence>
<feature type="chain" id="PRO_1000197350" description="Undecaprenyl-diphosphatase">
    <location>
        <begin position="1"/>
        <end position="266"/>
    </location>
</feature>
<feature type="transmembrane region" description="Helical" evidence="1">
    <location>
        <begin position="4"/>
        <end position="24"/>
    </location>
</feature>
<feature type="transmembrane region" description="Helical" evidence="1">
    <location>
        <begin position="39"/>
        <end position="59"/>
    </location>
</feature>
<feature type="transmembrane region" description="Helical" evidence="1">
    <location>
        <begin position="86"/>
        <end position="106"/>
    </location>
</feature>
<feature type="transmembrane region" description="Helical" evidence="1">
    <location>
        <begin position="112"/>
        <end position="132"/>
    </location>
</feature>
<feature type="transmembrane region" description="Helical" evidence="1">
    <location>
        <begin position="145"/>
        <end position="165"/>
    </location>
</feature>
<feature type="transmembrane region" description="Helical" evidence="1">
    <location>
        <begin position="182"/>
        <end position="202"/>
    </location>
</feature>
<feature type="transmembrane region" description="Helical" evidence="1">
    <location>
        <begin position="210"/>
        <end position="230"/>
    </location>
</feature>
<feature type="transmembrane region" description="Helical" evidence="1">
    <location>
        <begin position="246"/>
        <end position="266"/>
    </location>
</feature>
<proteinExistence type="inferred from homology"/>